<keyword id="KW-0256">Endoplasmic reticulum</keyword>
<keyword id="KW-0275">Fatty acid biosynthesis</keyword>
<keyword id="KW-0276">Fatty acid metabolism</keyword>
<keyword id="KW-0408">Iron</keyword>
<keyword id="KW-0444">Lipid biosynthesis</keyword>
<keyword id="KW-0443">Lipid metabolism</keyword>
<keyword id="KW-0472">Membrane</keyword>
<keyword id="KW-0479">Metal-binding</keyword>
<keyword id="KW-0492">Microsome</keyword>
<keyword id="KW-0560">Oxidoreductase</keyword>
<keyword id="KW-1185">Reference proteome</keyword>
<keyword id="KW-0812">Transmembrane</keyword>
<keyword id="KW-1133">Transmembrane helix</keyword>
<gene>
    <name type="primary">Scd2</name>
</gene>
<dbReference type="EC" id="1.14.19.1" evidence="6"/>
<dbReference type="EMBL" id="AB032243">
    <property type="protein sequence ID" value="BAA92436.1"/>
    <property type="molecule type" value="mRNA"/>
</dbReference>
<dbReference type="EMBL" id="BC061737">
    <property type="protein sequence ID" value="AAH61737.1"/>
    <property type="molecule type" value="mRNA"/>
</dbReference>
<dbReference type="EMBL" id="S75730">
    <property type="protein sequence ID" value="AAB32826.1"/>
    <property type="molecule type" value="mRNA"/>
</dbReference>
<dbReference type="RefSeq" id="NP_114029.1">
    <property type="nucleotide sequence ID" value="NM_031841.1"/>
</dbReference>
<dbReference type="SMR" id="Q6P7B9"/>
<dbReference type="FunCoup" id="Q6P7B9">
    <property type="interactions" value="588"/>
</dbReference>
<dbReference type="STRING" id="10116.ENSRNOP00000067809"/>
<dbReference type="SwissLipids" id="SLP:000000455"/>
<dbReference type="iPTMnet" id="Q6P7B9"/>
<dbReference type="PhosphoSitePlus" id="Q6P7B9"/>
<dbReference type="PaxDb" id="10116-ENSRNOP00000067809"/>
<dbReference type="GeneID" id="83792"/>
<dbReference type="KEGG" id="rno:83792"/>
<dbReference type="UCSC" id="RGD:621177">
    <property type="organism name" value="rat"/>
</dbReference>
<dbReference type="AGR" id="RGD:621177"/>
<dbReference type="CTD" id="20250"/>
<dbReference type="RGD" id="621177">
    <property type="gene designation" value="Scd2"/>
</dbReference>
<dbReference type="eggNOG" id="KOG1600">
    <property type="taxonomic scope" value="Eukaryota"/>
</dbReference>
<dbReference type="InParanoid" id="Q6P7B9"/>
<dbReference type="OrthoDB" id="10260134at2759"/>
<dbReference type="PhylomeDB" id="Q6P7B9"/>
<dbReference type="TreeFam" id="TF313251"/>
<dbReference type="BRENDA" id="1.14.19.1">
    <property type="organism ID" value="5301"/>
</dbReference>
<dbReference type="Reactome" id="R-RNO-75105">
    <property type="pathway name" value="Fatty acyl-CoA biosynthesis"/>
</dbReference>
<dbReference type="PRO" id="PR:Q6P7B9"/>
<dbReference type="Proteomes" id="UP000002494">
    <property type="component" value="Unplaced"/>
</dbReference>
<dbReference type="GO" id="GO:0005783">
    <property type="term" value="C:endoplasmic reticulum"/>
    <property type="evidence" value="ECO:0000266"/>
    <property type="project" value="RGD"/>
</dbReference>
<dbReference type="GO" id="GO:0005789">
    <property type="term" value="C:endoplasmic reticulum membrane"/>
    <property type="evidence" value="ECO:0000318"/>
    <property type="project" value="GO_Central"/>
</dbReference>
<dbReference type="GO" id="GO:0005506">
    <property type="term" value="F:iron ion binding"/>
    <property type="evidence" value="ECO:0000318"/>
    <property type="project" value="GO_Central"/>
</dbReference>
<dbReference type="GO" id="GO:0032896">
    <property type="term" value="F:palmitoyl-CoA 9-desaturase activity"/>
    <property type="evidence" value="ECO:0000266"/>
    <property type="project" value="RGD"/>
</dbReference>
<dbReference type="GO" id="GO:0004768">
    <property type="term" value="F:stearoyl-CoA 9-desaturase activity"/>
    <property type="evidence" value="ECO:0000314"/>
    <property type="project" value="RGD"/>
</dbReference>
<dbReference type="GO" id="GO:0006633">
    <property type="term" value="P:fatty acid biosynthetic process"/>
    <property type="evidence" value="ECO:0000304"/>
    <property type="project" value="RGD"/>
</dbReference>
<dbReference type="GO" id="GO:1903966">
    <property type="term" value="P:monounsaturated fatty acid biosynthetic process"/>
    <property type="evidence" value="ECO:0000266"/>
    <property type="project" value="RGD"/>
</dbReference>
<dbReference type="GO" id="GO:0042552">
    <property type="term" value="P:myelination"/>
    <property type="evidence" value="ECO:0000270"/>
    <property type="project" value="RGD"/>
</dbReference>
<dbReference type="GO" id="GO:0070542">
    <property type="term" value="P:response to fatty acid"/>
    <property type="evidence" value="ECO:0000314"/>
    <property type="project" value="UniProtKB"/>
</dbReference>
<dbReference type="GO" id="GO:0006636">
    <property type="term" value="P:unsaturated fatty acid biosynthetic process"/>
    <property type="evidence" value="ECO:0000318"/>
    <property type="project" value="GO_Central"/>
</dbReference>
<dbReference type="CDD" id="cd03505">
    <property type="entry name" value="Delta9-FADS-like"/>
    <property type="match status" value="1"/>
</dbReference>
<dbReference type="InterPro" id="IPR015876">
    <property type="entry name" value="Acyl-CoA_DS"/>
</dbReference>
<dbReference type="InterPro" id="IPR005804">
    <property type="entry name" value="FA_desaturase_dom"/>
</dbReference>
<dbReference type="InterPro" id="IPR001522">
    <property type="entry name" value="FADS-1_CS"/>
</dbReference>
<dbReference type="PANTHER" id="PTHR11351">
    <property type="entry name" value="ACYL-COA DESATURASE"/>
    <property type="match status" value="1"/>
</dbReference>
<dbReference type="PANTHER" id="PTHR11351:SF97">
    <property type="entry name" value="STEAROYL-COA DESATURASE 2"/>
    <property type="match status" value="1"/>
</dbReference>
<dbReference type="Pfam" id="PF00487">
    <property type="entry name" value="FA_desaturase"/>
    <property type="match status" value="1"/>
</dbReference>
<dbReference type="PRINTS" id="PR00075">
    <property type="entry name" value="FACDDSATRASE"/>
</dbReference>
<dbReference type="PROSITE" id="PS00476">
    <property type="entry name" value="FATTY_ACID_DESATUR_1"/>
    <property type="match status" value="1"/>
</dbReference>
<feature type="chain" id="PRO_0000185401" description="Stearoyl-CoA desaturase 2">
    <location>
        <begin position="1"/>
        <end position="358"/>
    </location>
</feature>
<feature type="topological domain" description="Cytoplasmic" evidence="1">
    <location>
        <begin position="1"/>
        <end position="71"/>
    </location>
</feature>
<feature type="transmembrane region" description="Helical" evidence="1">
    <location>
        <begin position="72"/>
        <end position="92"/>
    </location>
</feature>
<feature type="topological domain" description="Lumenal" evidence="1">
    <location>
        <begin position="93"/>
        <end position="96"/>
    </location>
</feature>
<feature type="transmembrane region" description="Helical" evidence="1">
    <location>
        <begin position="97"/>
        <end position="117"/>
    </location>
</feature>
<feature type="topological domain" description="Cytoplasmic" evidence="1">
    <location>
        <begin position="118"/>
        <end position="216"/>
    </location>
</feature>
<feature type="transmembrane region" description="Helical" evidence="1">
    <location>
        <begin position="217"/>
        <end position="236"/>
    </location>
</feature>
<feature type="topological domain" description="Lumenal" evidence="1">
    <location>
        <begin position="237"/>
        <end position="240"/>
    </location>
</feature>
<feature type="transmembrane region" description="Helical" evidence="1">
    <location>
        <begin position="241"/>
        <end position="262"/>
    </location>
</feature>
<feature type="topological domain" description="Cytoplasmic" evidence="1">
    <location>
        <begin position="263"/>
        <end position="358"/>
    </location>
</feature>
<feature type="region of interest" description="Disordered" evidence="4">
    <location>
        <begin position="14"/>
        <end position="43"/>
    </location>
</feature>
<feature type="short sequence motif" description="Histidine box-1" evidence="8">
    <location>
        <begin position="119"/>
        <end position="124"/>
    </location>
</feature>
<feature type="short sequence motif" description="Histidine box-2" evidence="8">
    <location>
        <begin position="156"/>
        <end position="160"/>
    </location>
</feature>
<feature type="short sequence motif" description="Histidine box-3" evidence="8">
    <location>
        <begin position="297"/>
        <end position="301"/>
    </location>
</feature>
<feature type="compositionally biased region" description="Basic and acidic residues" evidence="4">
    <location>
        <begin position="32"/>
        <end position="43"/>
    </location>
</feature>
<feature type="binding site" evidence="1">
    <location>
        <position position="74"/>
    </location>
    <ligand>
        <name>substrate</name>
    </ligand>
</feature>
<feature type="binding site" evidence="3">
    <location>
        <position position="119"/>
    </location>
    <ligand>
        <name>Fe cation</name>
        <dbReference type="ChEBI" id="CHEBI:24875"/>
        <label>1</label>
    </ligand>
</feature>
<feature type="binding site" evidence="3">
    <location>
        <position position="124"/>
    </location>
    <ligand>
        <name>Fe cation</name>
        <dbReference type="ChEBI" id="CHEBI:24875"/>
        <label>1</label>
    </ligand>
</feature>
<feature type="binding site" evidence="1">
    <location>
        <position position="147"/>
    </location>
    <ligand>
        <name>substrate</name>
    </ligand>
</feature>
<feature type="binding site" evidence="1">
    <location>
        <position position="154"/>
    </location>
    <ligand>
        <name>substrate</name>
    </ligand>
</feature>
<feature type="binding site" evidence="1">
    <location>
        <position position="155"/>
    </location>
    <ligand>
        <name>substrate</name>
    </ligand>
</feature>
<feature type="binding site" evidence="3">
    <location>
        <position position="156"/>
    </location>
    <ligand>
        <name>Fe cation</name>
        <dbReference type="ChEBI" id="CHEBI:24875"/>
        <label>1</label>
    </ligand>
</feature>
<feature type="binding site" evidence="3">
    <location>
        <position position="159"/>
    </location>
    <ligand>
        <name>Fe cation</name>
        <dbReference type="ChEBI" id="CHEBI:24875"/>
        <label>2</label>
    </ligand>
</feature>
<feature type="binding site" evidence="3">
    <location>
        <position position="160"/>
    </location>
    <ligand>
        <name>Fe cation</name>
        <dbReference type="ChEBI" id="CHEBI:24875"/>
        <label>1</label>
    </ligand>
</feature>
<feature type="binding site" evidence="1">
    <location>
        <position position="187"/>
    </location>
    <ligand>
        <name>substrate</name>
    </ligand>
</feature>
<feature type="binding site" evidence="1">
    <location>
        <position position="188"/>
    </location>
    <ligand>
        <name>substrate</name>
    </ligand>
</feature>
<feature type="binding site" evidence="1">
    <location>
        <position position="261"/>
    </location>
    <ligand>
        <name>substrate</name>
    </ligand>
</feature>
<feature type="binding site" evidence="3">
    <location>
        <position position="268"/>
    </location>
    <ligand>
        <name>Fe cation</name>
        <dbReference type="ChEBI" id="CHEBI:24875"/>
        <label>2</label>
    </ligand>
</feature>
<feature type="binding site" evidence="3">
    <location>
        <position position="297"/>
    </location>
    <ligand>
        <name>Fe cation</name>
        <dbReference type="ChEBI" id="CHEBI:24875"/>
        <label>2</label>
    </ligand>
</feature>
<feature type="binding site" evidence="3">
    <location>
        <position position="300"/>
    </location>
    <ligand>
        <name>Fe cation</name>
        <dbReference type="ChEBI" id="CHEBI:24875"/>
        <label>1</label>
    </ligand>
</feature>
<feature type="binding site" evidence="3">
    <location>
        <position position="301"/>
    </location>
    <ligand>
        <name>Fe cation</name>
        <dbReference type="ChEBI" id="CHEBI:24875"/>
        <label>2</label>
    </ligand>
</feature>
<feature type="sequence conflict" description="In Ref. 1; BAA92436." evidence="8" ref="1">
    <original>V</original>
    <variation>I</variation>
    <location>
        <position position="76"/>
    </location>
</feature>
<comment type="function">
    <text evidence="2 6">Stearoyl-CoA desaturase that utilizes O(2) and electrons from reduced cytochrome b5 to introduce the first double bond into saturated fatty acyl-CoA substrates. Catalyzes the insertion of a cis double bond at the delta-9 position into fatty acyl-CoA substrates including palmitoyl-CoA and stearoyl-CoA (PubMed:20228221). Gives rise to a mixture of 16:1 and 18:1 unsaturated fatty acids (PubMed:20228221). Contributes to the biosynthesis of membrane phospholipids, cholesterol esters and triglycerides, especially during embryonic development and in neonates. Important for normal permeability barrier function of the skin in neonates.</text>
</comment>
<comment type="catalytic activity">
    <reaction evidence="6">
        <text>octadecanoyl-CoA + 2 Fe(II)-[cytochrome b5] + O2 + 2 H(+) = (9Z)-octadecenoyl-CoA + 2 Fe(III)-[cytochrome b5] + 2 H2O</text>
        <dbReference type="Rhea" id="RHEA:19721"/>
        <dbReference type="Rhea" id="RHEA-COMP:10438"/>
        <dbReference type="Rhea" id="RHEA-COMP:10439"/>
        <dbReference type="ChEBI" id="CHEBI:15377"/>
        <dbReference type="ChEBI" id="CHEBI:15378"/>
        <dbReference type="ChEBI" id="CHEBI:15379"/>
        <dbReference type="ChEBI" id="CHEBI:29033"/>
        <dbReference type="ChEBI" id="CHEBI:29034"/>
        <dbReference type="ChEBI" id="CHEBI:57387"/>
        <dbReference type="ChEBI" id="CHEBI:57394"/>
        <dbReference type="EC" id="1.14.19.1"/>
    </reaction>
    <physiologicalReaction direction="left-to-right" evidence="9">
        <dbReference type="Rhea" id="RHEA:19722"/>
    </physiologicalReaction>
</comment>
<comment type="catalytic activity">
    <reaction evidence="6">
        <text>hexadecanoyl-CoA + 2 Fe(II)-[cytochrome b5] + O2 + 2 H(+) = (9Z)-hexadecenoyl-CoA + 2 Fe(III)-[cytochrome b5] + 2 H2O</text>
        <dbReference type="Rhea" id="RHEA:36931"/>
        <dbReference type="Rhea" id="RHEA-COMP:10438"/>
        <dbReference type="Rhea" id="RHEA-COMP:10439"/>
        <dbReference type="ChEBI" id="CHEBI:15377"/>
        <dbReference type="ChEBI" id="CHEBI:15378"/>
        <dbReference type="ChEBI" id="CHEBI:15379"/>
        <dbReference type="ChEBI" id="CHEBI:29033"/>
        <dbReference type="ChEBI" id="CHEBI:29034"/>
        <dbReference type="ChEBI" id="CHEBI:57379"/>
        <dbReference type="ChEBI" id="CHEBI:61540"/>
    </reaction>
    <physiologicalReaction direction="left-to-right" evidence="9">
        <dbReference type="Rhea" id="RHEA:36932"/>
    </physiologicalReaction>
</comment>
<comment type="cofactor">
    <cofactor evidence="3">
        <name>Fe(2+)</name>
        <dbReference type="ChEBI" id="CHEBI:29033"/>
    </cofactor>
    <text evidence="3">Expected to bind 2 Fe(2+) ions per subunit.</text>
</comment>
<comment type="subcellular location">
    <subcellularLocation>
        <location evidence="2">Endoplasmic reticulum membrane</location>
        <topology evidence="2">Multi-pass membrane protein</topology>
    </subcellularLocation>
    <subcellularLocation>
        <location evidence="2">Microsome membrane</location>
    </subcellularLocation>
</comment>
<comment type="tissue specificity">
    <text evidence="5">Detected in brain and adipose tissue, and at much lower levels in testis. Detected in liver when rats are kept on a fat-free diet, but not when their food contains unsaturated fatty acids.</text>
</comment>
<comment type="induction">
    <text evidence="5">Up-regulated in liver in the absence of dietary unsaturated fatty acids (PubMed:1982442). Expression in adipose tissue seems to be constitutive (PubMed:1982442).</text>
</comment>
<comment type="domain">
    <text evidence="1">The histidine box domains are involved in binding the catalytic metal ions.</text>
</comment>
<comment type="similarity">
    <text evidence="8">Belongs to the fatty acid desaturase type 1 family.</text>
</comment>
<organism>
    <name type="scientific">Rattus norvegicus</name>
    <name type="common">Rat</name>
    <dbReference type="NCBI Taxonomy" id="10116"/>
    <lineage>
        <taxon>Eukaryota</taxon>
        <taxon>Metazoa</taxon>
        <taxon>Chordata</taxon>
        <taxon>Craniata</taxon>
        <taxon>Vertebrata</taxon>
        <taxon>Euteleostomi</taxon>
        <taxon>Mammalia</taxon>
        <taxon>Eutheria</taxon>
        <taxon>Euarchontoglires</taxon>
        <taxon>Glires</taxon>
        <taxon>Rodentia</taxon>
        <taxon>Myomorpha</taxon>
        <taxon>Muroidea</taxon>
        <taxon>Muridae</taxon>
        <taxon>Murinae</taxon>
        <taxon>Rattus</taxon>
    </lineage>
</organism>
<evidence type="ECO:0000250" key="1">
    <source>
        <dbReference type="UniProtKB" id="O00767"/>
    </source>
</evidence>
<evidence type="ECO:0000250" key="2">
    <source>
        <dbReference type="UniProtKB" id="P13011"/>
    </source>
</evidence>
<evidence type="ECO:0000250" key="3">
    <source>
        <dbReference type="UniProtKB" id="P13516"/>
    </source>
</evidence>
<evidence type="ECO:0000256" key="4">
    <source>
        <dbReference type="SAM" id="MobiDB-lite"/>
    </source>
</evidence>
<evidence type="ECO:0000269" key="5">
    <source>
    </source>
</evidence>
<evidence type="ECO:0000269" key="6">
    <source>
    </source>
</evidence>
<evidence type="ECO:0000303" key="7">
    <source ref="1"/>
</evidence>
<evidence type="ECO:0000305" key="8"/>
<evidence type="ECO:0000305" key="9">
    <source>
    </source>
</evidence>
<protein>
    <recommendedName>
        <fullName evidence="7">Stearoyl-CoA desaturase 2</fullName>
        <ecNumber evidence="6">1.14.19.1</ecNumber>
    </recommendedName>
    <alternativeName>
        <fullName>Acyl-CoA desaturase 2</fullName>
    </alternativeName>
    <alternativeName>
        <fullName>Delta(9)-desaturase 2</fullName>
        <shortName>Delta-9 desaturase 2</shortName>
    </alternativeName>
    <alternativeName>
        <fullName>Fatty acid desaturase 2</fullName>
    </alternativeName>
</protein>
<sequence>MPAHILQEISGSYSATTTITAPPSGGQQNGGEKFEKNPHHWGADVRPEIKDDLYDPSYQDEEGPPPKLEYVWRNIVLMALLHIGALYGITLVPSCKVYTCLFAYLYYVISALGITAGAHRLWSHRTYKARLPLRLFLIIANTMAFQNDVYEWARDHRAHHKFSETHADPHNSRRGFFFSHVGWLLVRKHPAVKEKGGKLDMSDLKAEKLVMFQRRYYKPGLLLMCFILPTLVPWYCWGETFVNSLCVSTFLRYAVVLNATWLVNSAAHLYGYRPYDKNISSRENILVSMGAVGEGFHNYHHAFPYDYSASEYRWHINFTTFFIDCMALLGLAYDRKRVSKAAVLARIKRTGEESCKSG</sequence>
<name>SCD2_RAT</name>
<accession>Q6P7B9</accession>
<accession>Q64066</accession>
<accession>Q9JMC9</accession>
<proteinExistence type="evidence at protein level"/>
<reference key="1">
    <citation type="submission" date="1999-09" db="EMBL/GenBank/DDBJ databases">
        <title>Molecular cloning and tissue expression of rat stearoyl-CoA desaturase 2.</title>
        <authorList>
            <person name="Hoshino T."/>
            <person name="Ishiguro K."/>
            <person name="Ohtsu K."/>
        </authorList>
    </citation>
    <scope>NUCLEOTIDE SEQUENCE [MRNA]</scope>
</reference>
<reference key="2">
    <citation type="journal article" date="2004" name="Genome Res.">
        <title>The status, quality, and expansion of the NIH full-length cDNA project: the Mammalian Gene Collection (MGC).</title>
        <authorList>
            <consortium name="The MGC Project Team"/>
        </authorList>
    </citation>
    <scope>NUCLEOTIDE SEQUENCE [LARGE SCALE MRNA]</scope>
    <source>
        <tissue>Prostate</tissue>
    </source>
</reference>
<reference key="3">
    <citation type="journal article" date="1994" name="Neurochem. Res.">
        <title>Identification of novel mRNAs expressed in oligodendrocytes.</title>
        <authorList>
            <person name="Baba H."/>
            <person name="Fuss B."/>
            <person name="Watson J.B."/>
            <person name="Zane L.T."/>
            <person name="Macklin W.B."/>
        </authorList>
    </citation>
    <scope>NUCLEOTIDE SEQUENCE [MRNA] OF 1-60</scope>
</reference>
<reference key="4">
    <citation type="journal article" date="1990" name="J. Biochem.">
        <title>Structure and regulation of rat liver microsomal stearoyl-CoA desaturase gene.</title>
        <authorList>
            <person name="Mihara K."/>
        </authorList>
    </citation>
    <scope>TISSUE SPECIFICITY</scope>
    <scope>INDUCTION BY FAT-FREE DIET</scope>
</reference>
<reference key="5">
    <citation type="journal article" date="2010" name="J. Lipid Res.">
        <title>Role of fatty acid elongases in determination of de novo synthesized monounsaturated fatty acid species.</title>
        <authorList>
            <person name="Green C.D."/>
            <person name="Ozguden-Akkoc C.G."/>
            <person name="Wang Y."/>
            <person name="Jump D.B."/>
            <person name="Olson L.K."/>
        </authorList>
    </citation>
    <scope>CATALYTIC ACTIVITY</scope>
    <scope>FUNCTION</scope>
</reference>